<sequence>MADTGYYAGYQDDVDVDEHKRHQALYLIGIILLVTVCLIVLWVCIMLACYVPGFLKKTLEAWLNSSSLMKRRVASTLTRTPFEATGPERERNWDARRQSTTVNPASQPNTGSVF</sequence>
<comment type="function">
    <text evidence="1">May transport viral genome to neighboring plant cells directly through plasmosdesmata, without any budding. The movement protein allows efficient cell to cell propagation, by bypassing the host cell wall barrier (By similarity).</text>
</comment>
<comment type="subcellular location">
    <subcellularLocation>
        <location evidence="4">Host cell membrane</location>
        <topology evidence="4">Single-pass membrane protein</topology>
    </subcellularLocation>
    <text evidence="1">The hydrophobic region is responsible for the localization of the protein to the cell periphery.</text>
</comment>
<comment type="similarity">
    <text evidence="4">Belongs to the nanovirus movement protein family.</text>
</comment>
<reference key="1">
    <citation type="journal article" date="1997" name="Virology">
        <title>Analysis of six DNA components of the faba bean necrotic yellows virus genome and their structural affinity to related plant virus genomes.</title>
        <authorList>
            <person name="Katul L."/>
            <person name="Maiss E."/>
            <person name="Morozov S.Y."/>
            <person name="Vetten H.J."/>
        </authorList>
    </citation>
    <scope>NUCLEOTIDE SEQUENCE [GENOMIC DNA]</scope>
</reference>
<evidence type="ECO:0000250" key="1"/>
<evidence type="ECO:0000255" key="2"/>
<evidence type="ECO:0000256" key="3">
    <source>
        <dbReference type="SAM" id="MobiDB-lite"/>
    </source>
</evidence>
<evidence type="ECO:0000305" key="4"/>
<name>MVP_FBNY2</name>
<organism>
    <name type="scientific">Faba bean necrotic yellows virus (isolate Syrian SV292-88)</name>
    <name type="common">FBNYV</name>
    <dbReference type="NCBI Taxonomy" id="291604"/>
    <lineage>
        <taxon>Viruses</taxon>
        <taxon>Monodnaviria</taxon>
        <taxon>Shotokuvirae</taxon>
        <taxon>Cressdnaviricota</taxon>
        <taxon>Arfiviricetes</taxon>
        <taxon>Mulpavirales</taxon>
        <taxon>Nanoviridae</taxon>
        <taxon>Nanovirus</taxon>
        <taxon>Faba bean necrotic yellows virus</taxon>
    </lineage>
</organism>
<proteinExistence type="inferred from homology"/>
<gene>
    <name type="primary">DNA-M</name>
    <name type="synonym">C4</name>
</gene>
<protein>
    <recommendedName>
        <fullName>Putative movement protein</fullName>
        <shortName>MP</shortName>
    </recommendedName>
</protein>
<keyword id="KW-1032">Host cell membrane</keyword>
<keyword id="KW-1043">Host membrane</keyword>
<keyword id="KW-0472">Membrane</keyword>
<keyword id="KW-1185">Reference proteome</keyword>
<keyword id="KW-0812">Transmembrane</keyword>
<keyword id="KW-1133">Transmembrane helix</keyword>
<keyword id="KW-0813">Transport</keyword>
<keyword id="KW-0916">Viral movement protein</keyword>
<feature type="chain" id="PRO_0000378538" description="Putative movement protein">
    <location>
        <begin position="1"/>
        <end position="114"/>
    </location>
</feature>
<feature type="transmembrane region" description="Helical" evidence="2">
    <location>
        <begin position="27"/>
        <end position="47"/>
    </location>
</feature>
<feature type="region of interest" description="Disordered" evidence="3">
    <location>
        <begin position="79"/>
        <end position="114"/>
    </location>
</feature>
<feature type="compositionally biased region" description="Basic and acidic residues" evidence="3">
    <location>
        <begin position="86"/>
        <end position="97"/>
    </location>
</feature>
<feature type="compositionally biased region" description="Polar residues" evidence="3">
    <location>
        <begin position="98"/>
        <end position="114"/>
    </location>
</feature>
<organismHost>
    <name type="scientific">Cicer arietinum</name>
    <name type="common">Chickpea</name>
    <name type="synonym">Garbanzo</name>
    <dbReference type="NCBI Taxonomy" id="3827"/>
</organismHost>
<organismHost>
    <name type="scientific">Lens culinaris</name>
    <name type="common">Lentil</name>
    <name type="synonym">Cicer lens</name>
    <dbReference type="NCBI Taxonomy" id="3864"/>
</organismHost>
<organismHost>
    <name type="scientific">Phaseolus vulgaris</name>
    <name type="common">Kidney bean</name>
    <name type="synonym">French bean</name>
    <dbReference type="NCBI Taxonomy" id="3885"/>
</organismHost>
<organismHost>
    <name type="scientific">Vicia faba</name>
    <name type="common">Broad bean</name>
    <name type="synonym">Faba vulgaris</name>
    <dbReference type="NCBI Taxonomy" id="3906"/>
</organismHost>
<dbReference type="EMBL" id="Y11407">
    <property type="protein sequence ID" value="CAA72211.1"/>
    <property type="molecule type" value="Genomic_DNA"/>
</dbReference>
<dbReference type="SMR" id="O39830"/>
<dbReference type="Proteomes" id="UP001515460">
    <property type="component" value="Genome"/>
</dbReference>
<dbReference type="GO" id="GO:0020002">
    <property type="term" value="C:host cell plasma membrane"/>
    <property type="evidence" value="ECO:0007669"/>
    <property type="project" value="UniProtKB-SubCell"/>
</dbReference>
<dbReference type="GO" id="GO:0016020">
    <property type="term" value="C:membrane"/>
    <property type="evidence" value="ECO:0007669"/>
    <property type="project" value="UniProtKB-KW"/>
</dbReference>
<dbReference type="GO" id="GO:0046740">
    <property type="term" value="P:transport of virus in host, cell to cell"/>
    <property type="evidence" value="ECO:0007669"/>
    <property type="project" value="UniProtKB-KW"/>
</dbReference>
<accession>O39830</accession>